<keyword id="KW-0413">Isomerase</keyword>
<keyword id="KW-0460">Magnesium</keyword>
<keyword id="KW-0479">Metal-binding</keyword>
<keyword id="KW-0597">Phosphoprotein</keyword>
<keyword id="KW-1185">Reference proteome</keyword>
<proteinExistence type="inferred from homology"/>
<comment type="function">
    <text evidence="1">Catalyzes the conversion of glucosamine-6-phosphate to glucosamine-1-phosphate.</text>
</comment>
<comment type="catalytic activity">
    <reaction evidence="1">
        <text>alpha-D-glucosamine 1-phosphate = D-glucosamine 6-phosphate</text>
        <dbReference type="Rhea" id="RHEA:23424"/>
        <dbReference type="ChEBI" id="CHEBI:58516"/>
        <dbReference type="ChEBI" id="CHEBI:58725"/>
        <dbReference type="EC" id="5.4.2.10"/>
    </reaction>
</comment>
<comment type="cofactor">
    <cofactor evidence="1">
        <name>Mg(2+)</name>
        <dbReference type="ChEBI" id="CHEBI:18420"/>
    </cofactor>
    <text evidence="1">Binds 1 Mg(2+) ion per subunit.</text>
</comment>
<comment type="PTM">
    <text evidence="1">Activated by phosphorylation.</text>
</comment>
<comment type="similarity">
    <text evidence="1">Belongs to the phosphohexose mutase family.</text>
</comment>
<evidence type="ECO:0000255" key="1">
    <source>
        <dbReference type="HAMAP-Rule" id="MF_01554"/>
    </source>
</evidence>
<dbReference type="EC" id="5.4.2.10" evidence="1"/>
<dbReference type="EMBL" id="CP000854">
    <property type="protein sequence ID" value="ACC39564.1"/>
    <property type="molecule type" value="Genomic_DNA"/>
</dbReference>
<dbReference type="RefSeq" id="WP_012392995.1">
    <property type="nucleotide sequence ID" value="NC_010612.1"/>
</dbReference>
<dbReference type="SMR" id="B2HCZ2"/>
<dbReference type="STRING" id="216594.MMAR_1108"/>
<dbReference type="GeneID" id="34342153"/>
<dbReference type="KEGG" id="mmi:MMAR_1108"/>
<dbReference type="eggNOG" id="COG1109">
    <property type="taxonomic scope" value="Bacteria"/>
</dbReference>
<dbReference type="HOGENOM" id="CLU_016950_7_0_11"/>
<dbReference type="OrthoDB" id="9803322at2"/>
<dbReference type="Proteomes" id="UP000001190">
    <property type="component" value="Chromosome"/>
</dbReference>
<dbReference type="GO" id="GO:0005829">
    <property type="term" value="C:cytosol"/>
    <property type="evidence" value="ECO:0007669"/>
    <property type="project" value="TreeGrafter"/>
</dbReference>
<dbReference type="GO" id="GO:0000287">
    <property type="term" value="F:magnesium ion binding"/>
    <property type="evidence" value="ECO:0007669"/>
    <property type="project" value="UniProtKB-UniRule"/>
</dbReference>
<dbReference type="GO" id="GO:0008966">
    <property type="term" value="F:phosphoglucosamine mutase activity"/>
    <property type="evidence" value="ECO:0007669"/>
    <property type="project" value="UniProtKB-UniRule"/>
</dbReference>
<dbReference type="GO" id="GO:0004615">
    <property type="term" value="F:phosphomannomutase activity"/>
    <property type="evidence" value="ECO:0007669"/>
    <property type="project" value="TreeGrafter"/>
</dbReference>
<dbReference type="GO" id="GO:0005975">
    <property type="term" value="P:carbohydrate metabolic process"/>
    <property type="evidence" value="ECO:0007669"/>
    <property type="project" value="InterPro"/>
</dbReference>
<dbReference type="GO" id="GO:0009252">
    <property type="term" value="P:peptidoglycan biosynthetic process"/>
    <property type="evidence" value="ECO:0007669"/>
    <property type="project" value="TreeGrafter"/>
</dbReference>
<dbReference type="GO" id="GO:0006048">
    <property type="term" value="P:UDP-N-acetylglucosamine biosynthetic process"/>
    <property type="evidence" value="ECO:0007669"/>
    <property type="project" value="TreeGrafter"/>
</dbReference>
<dbReference type="CDD" id="cd05802">
    <property type="entry name" value="GlmM"/>
    <property type="match status" value="1"/>
</dbReference>
<dbReference type="FunFam" id="3.30.310.50:FF:000001">
    <property type="entry name" value="Phosphoglucosamine mutase"/>
    <property type="match status" value="1"/>
</dbReference>
<dbReference type="FunFam" id="3.40.120.10:FF:000001">
    <property type="entry name" value="Phosphoglucosamine mutase"/>
    <property type="match status" value="1"/>
</dbReference>
<dbReference type="FunFam" id="3.40.120.10:FF:000002">
    <property type="entry name" value="Phosphoglucosamine mutase"/>
    <property type="match status" value="1"/>
</dbReference>
<dbReference type="Gene3D" id="3.40.120.10">
    <property type="entry name" value="Alpha-D-Glucose-1,6-Bisphosphate, subunit A, domain 3"/>
    <property type="match status" value="3"/>
</dbReference>
<dbReference type="Gene3D" id="3.30.310.50">
    <property type="entry name" value="Alpha-D-phosphohexomutase, C-terminal domain"/>
    <property type="match status" value="1"/>
</dbReference>
<dbReference type="HAMAP" id="MF_01554_B">
    <property type="entry name" value="GlmM_B"/>
    <property type="match status" value="1"/>
</dbReference>
<dbReference type="InterPro" id="IPR005844">
    <property type="entry name" value="A-D-PHexomutase_a/b/a-I"/>
</dbReference>
<dbReference type="InterPro" id="IPR016055">
    <property type="entry name" value="A-D-PHexomutase_a/b/a-I/II/III"/>
</dbReference>
<dbReference type="InterPro" id="IPR005845">
    <property type="entry name" value="A-D-PHexomutase_a/b/a-II"/>
</dbReference>
<dbReference type="InterPro" id="IPR005846">
    <property type="entry name" value="A-D-PHexomutase_a/b/a-III"/>
</dbReference>
<dbReference type="InterPro" id="IPR005843">
    <property type="entry name" value="A-D-PHexomutase_C"/>
</dbReference>
<dbReference type="InterPro" id="IPR036900">
    <property type="entry name" value="A-D-PHexomutase_C_sf"/>
</dbReference>
<dbReference type="InterPro" id="IPR016066">
    <property type="entry name" value="A-D-PHexomutase_CS"/>
</dbReference>
<dbReference type="InterPro" id="IPR005841">
    <property type="entry name" value="Alpha-D-phosphohexomutase_SF"/>
</dbReference>
<dbReference type="InterPro" id="IPR006352">
    <property type="entry name" value="GlmM_bact"/>
</dbReference>
<dbReference type="InterPro" id="IPR050060">
    <property type="entry name" value="Phosphoglucosamine_mutase"/>
</dbReference>
<dbReference type="NCBIfam" id="TIGR01455">
    <property type="entry name" value="glmM"/>
    <property type="match status" value="1"/>
</dbReference>
<dbReference type="PANTHER" id="PTHR42946:SF1">
    <property type="entry name" value="PHOSPHOGLUCOMUTASE (ALPHA-D-GLUCOSE-1,6-BISPHOSPHATE-DEPENDENT)"/>
    <property type="match status" value="1"/>
</dbReference>
<dbReference type="PANTHER" id="PTHR42946">
    <property type="entry name" value="PHOSPHOHEXOSE MUTASE"/>
    <property type="match status" value="1"/>
</dbReference>
<dbReference type="Pfam" id="PF02878">
    <property type="entry name" value="PGM_PMM_I"/>
    <property type="match status" value="1"/>
</dbReference>
<dbReference type="Pfam" id="PF02879">
    <property type="entry name" value="PGM_PMM_II"/>
    <property type="match status" value="1"/>
</dbReference>
<dbReference type="Pfam" id="PF02880">
    <property type="entry name" value="PGM_PMM_III"/>
    <property type="match status" value="1"/>
</dbReference>
<dbReference type="Pfam" id="PF00408">
    <property type="entry name" value="PGM_PMM_IV"/>
    <property type="match status" value="1"/>
</dbReference>
<dbReference type="PRINTS" id="PR00509">
    <property type="entry name" value="PGMPMM"/>
</dbReference>
<dbReference type="SUPFAM" id="SSF55957">
    <property type="entry name" value="Phosphoglucomutase, C-terminal domain"/>
    <property type="match status" value="1"/>
</dbReference>
<dbReference type="SUPFAM" id="SSF53738">
    <property type="entry name" value="Phosphoglucomutase, first 3 domains"/>
    <property type="match status" value="3"/>
</dbReference>
<dbReference type="PROSITE" id="PS00710">
    <property type="entry name" value="PGM_PMM"/>
    <property type="match status" value="1"/>
</dbReference>
<name>GLMM_MYCMM</name>
<accession>B2HCZ2</accession>
<organism>
    <name type="scientific">Mycobacterium marinum (strain ATCC BAA-535 / M)</name>
    <dbReference type="NCBI Taxonomy" id="216594"/>
    <lineage>
        <taxon>Bacteria</taxon>
        <taxon>Bacillati</taxon>
        <taxon>Actinomycetota</taxon>
        <taxon>Actinomycetes</taxon>
        <taxon>Mycobacteriales</taxon>
        <taxon>Mycobacteriaceae</taxon>
        <taxon>Mycobacterium</taxon>
        <taxon>Mycobacterium ulcerans group</taxon>
    </lineage>
</organism>
<gene>
    <name evidence="1" type="primary">glmM</name>
    <name type="ordered locus">MMAR_1108</name>
</gene>
<feature type="chain" id="PRO_1000201120" description="Phosphoglucosamine mutase">
    <location>
        <begin position="1"/>
        <end position="445"/>
    </location>
</feature>
<feature type="active site" description="Phosphoserine intermediate" evidence="1">
    <location>
        <position position="102"/>
    </location>
</feature>
<feature type="binding site" description="via phosphate group" evidence="1">
    <location>
        <position position="102"/>
    </location>
    <ligand>
        <name>Mg(2+)</name>
        <dbReference type="ChEBI" id="CHEBI:18420"/>
    </ligand>
</feature>
<feature type="binding site" evidence="1">
    <location>
        <position position="240"/>
    </location>
    <ligand>
        <name>Mg(2+)</name>
        <dbReference type="ChEBI" id="CHEBI:18420"/>
    </ligand>
</feature>
<feature type="binding site" evidence="1">
    <location>
        <position position="242"/>
    </location>
    <ligand>
        <name>Mg(2+)</name>
        <dbReference type="ChEBI" id="CHEBI:18420"/>
    </ligand>
</feature>
<feature type="binding site" evidence="1">
    <location>
        <position position="244"/>
    </location>
    <ligand>
        <name>Mg(2+)</name>
        <dbReference type="ChEBI" id="CHEBI:18420"/>
    </ligand>
</feature>
<feature type="modified residue" description="Phosphoserine" evidence="1">
    <location>
        <position position="102"/>
    </location>
</feature>
<reference key="1">
    <citation type="journal article" date="2008" name="Genome Res.">
        <title>Insights from the complete genome sequence of Mycobacterium marinum on the evolution of Mycobacterium tuberculosis.</title>
        <authorList>
            <person name="Stinear T.P."/>
            <person name="Seemann T."/>
            <person name="Harrison P.F."/>
            <person name="Jenkin G.A."/>
            <person name="Davies J.K."/>
            <person name="Johnson P.D."/>
            <person name="Abdellah Z."/>
            <person name="Arrowsmith C."/>
            <person name="Chillingworth T."/>
            <person name="Churcher C."/>
            <person name="Clarke K."/>
            <person name="Cronin A."/>
            <person name="Davis P."/>
            <person name="Goodhead I."/>
            <person name="Holroyd N."/>
            <person name="Jagels K."/>
            <person name="Lord A."/>
            <person name="Moule S."/>
            <person name="Mungall K."/>
            <person name="Norbertczak H."/>
            <person name="Quail M.A."/>
            <person name="Rabbinowitsch E."/>
            <person name="Walker D."/>
            <person name="White B."/>
            <person name="Whitehead S."/>
            <person name="Small P.L."/>
            <person name="Brosch R."/>
            <person name="Ramakrishnan L."/>
            <person name="Fischbach M.A."/>
            <person name="Parkhill J."/>
            <person name="Cole S.T."/>
        </authorList>
    </citation>
    <scope>NUCLEOTIDE SEQUENCE [LARGE SCALE GENOMIC DNA]</scope>
    <source>
        <strain>ATCC BAA-535 / M</strain>
    </source>
</reference>
<protein>
    <recommendedName>
        <fullName evidence="1">Phosphoglucosamine mutase</fullName>
        <ecNumber evidence="1">5.4.2.10</ecNumber>
    </recommendedName>
</protein>
<sequence>MGRLFGTDGVRGVANRELTAELALALGAATAQHLASSTGPGRRVAVVGRDPRASGEMLEAAVIAGLTSQGVDALRVGVLPTPAVAYLTGAYDADFGVMISASHNPMPDNGIKIFGPGGHKLDDATEDRIESLVAAGPGLRPVGSEIGRVIDAEDAADRYLRHVSKACTTRLDGLTVVVDCAHGAASEVGPRAYRAAGARVIEINADPNGLNINDDCGSTHLEAIRAAVLAHGADLGVAHDGDADRCLAVDANGDLVDGDAIMVVLALAMQEAGELASDTLVTTVMSNLGLHLAMREAGVNVRTTGVGDRYVLEELRAGDYSLGGEQSGHIVMPGLGSTGDGIVTGLRLMTRMVATGASLAALASRMQTLPQVLINVQVTDKAAAAAAPSVQAAVDRAETELGDTGRILLRPSGTEPLIRVMVEAADEEAAHRLATSVADAVSAAG</sequence>